<sequence>MVYSYTEKKRIRKDFGKRPQVLDIPYLLSIQLDSFQKFIEQDPEGQHGLEAAFRSVFPIQSYSGNSELQYVSYRLGEPVFDVKECQIRGVTYSAPLRVKLRLVIYEREAPEGTVKDIKEQEVYMGEIPLMTENGTFVINGTERVIVSQLHRSPGVFFDSDKGKTHSSGKVLYNARIIPYRGSWLDFEFDPKDNLFVRIDRRRKLPATIILRALNFTTAQILDLFFEKVVFEIRDNKLQMELVPERLRGETASFDIEANGKVYVEKARRITARHIRQLEKDGIDRIEVPVEYIAGKVVAKDYVDASTGELICAANMELSLDLLAKLSQAGHKQIETLFTNDLDHGAYISETLRVDPTSDRLSALVEIYRMMRPGEPPTREAAENLFENLFFSEDRYDLSAVGRMKFNRSLLRDEIEGSGILSKEDITEVMKKLIDIRNGRGEVDDIDHLGNRRIRSVGEMAENQFRVGLVRVERAVKERLSLGDLDTLMPQDMINAKPISAAVKEFFGSSQLSQFMDQNNPLSEITHKRRISALGPGGLTRERAGFEVRDVHPTHYGRVCPIETPEGPNIGLINSLSVYAQTNEYGFLETPYRRVRDGVVTDEINYLSAIEEGNFVIAQANSNLDDEGRFLEDLVTCRSKGESSLFSREQVDYMDVSTQQIVSVGASLIPFLEHDDANRALMGANMQRQAVPTLRADKPLVGTGMERAVAVDSGVTSVAKRGGTVQYVDASRIVIKVNEDEMHPGEAGIDIYNLTKYTRSNQNTCINQMPCVNLGEPIERGDVLADGPSTDLGELALGQNMRVAFMPWNGYNFEDSILVSERVVQEDRFTTIHIQELACVSRDTKLGPEEITADIPNVGEAALSKLDESGIVYIGAEVTGGDILVGKVTPKGETQLTPEEKLLRAIFGEKASDVKDSSLRVPNGVSGTVIDVQVFTRDGVEKDKRALEIEEMQLKQAKKDLTEELQILEAGLFARIHAVLVSGGIEAEKLSKLPRERWLELGLTDEDKQNQLEQLAEQYDEMKSEFEKKMDAKRRKITQGDDLAPGVLKIVKVYLAVKRQIQPGDKMAGRHGNKGVISKINPIEDMPYDENGTPVDIVLNPLGVPSRMNIGQILETHLGMAAKGIGEKINAMLKKQEEVAKLREFIQKAYDLGDNVCQKVDLSTFTDDEVLRLAENLKKGMPIATPVFDGATEKEIKELLQLGGLPTSGQITLFDGRTGEQFERQVTVGYMYMLKLNHLVDDKMHARSTGSYSLVTQQPLGGKAQFGGQRFGEMEVWALEAYGAAYTLQEMLTVKSDDVNGRTKMYKNIVDGDHRMEPGMPESFNVLLKEIRSLGINIELEEE</sequence>
<comment type="function">
    <text evidence="1">DNA-dependent RNA polymerase catalyzes the transcription of DNA into RNA using the four ribonucleoside triphosphates as substrates.</text>
</comment>
<comment type="catalytic activity">
    <reaction evidence="1">
        <text>RNA(n) + a ribonucleoside 5'-triphosphate = RNA(n+1) + diphosphate</text>
        <dbReference type="Rhea" id="RHEA:21248"/>
        <dbReference type="Rhea" id="RHEA-COMP:14527"/>
        <dbReference type="Rhea" id="RHEA-COMP:17342"/>
        <dbReference type="ChEBI" id="CHEBI:33019"/>
        <dbReference type="ChEBI" id="CHEBI:61557"/>
        <dbReference type="ChEBI" id="CHEBI:140395"/>
        <dbReference type="EC" id="2.7.7.6"/>
    </reaction>
</comment>
<comment type="subunit">
    <text evidence="1">The RNAP catalytic core consists of 2 alpha, 1 beta, 1 beta' and 1 omega subunit. When a sigma factor is associated with the core the holoenzyme is formed, which can initiate transcription.</text>
</comment>
<comment type="similarity">
    <text evidence="1">Belongs to the RNA polymerase beta chain family.</text>
</comment>
<proteinExistence type="inferred from homology"/>
<organism>
    <name type="scientific">Yersinia pestis bv. Antiqua (strain Nepal516)</name>
    <dbReference type="NCBI Taxonomy" id="377628"/>
    <lineage>
        <taxon>Bacteria</taxon>
        <taxon>Pseudomonadati</taxon>
        <taxon>Pseudomonadota</taxon>
        <taxon>Gammaproteobacteria</taxon>
        <taxon>Enterobacterales</taxon>
        <taxon>Yersiniaceae</taxon>
        <taxon>Yersinia</taxon>
    </lineage>
</organism>
<feature type="chain" id="PRO_0000300427" description="DNA-directed RNA polymerase subunit beta">
    <location>
        <begin position="1"/>
        <end position="1342"/>
    </location>
</feature>
<dbReference type="EC" id="2.7.7.6" evidence="1"/>
<dbReference type="EMBL" id="CP000305">
    <property type="protein sequence ID" value="ABG16552.1"/>
    <property type="molecule type" value="Genomic_DNA"/>
</dbReference>
<dbReference type="EMBL" id="ACNQ01000004">
    <property type="protein sequence ID" value="EEO78470.1"/>
    <property type="molecule type" value="Genomic_DNA"/>
</dbReference>
<dbReference type="RefSeq" id="WP_002210676.1">
    <property type="nucleotide sequence ID" value="NZ_ACNQ01000004.1"/>
</dbReference>
<dbReference type="SMR" id="Q1CN78"/>
<dbReference type="GeneID" id="57974971"/>
<dbReference type="KEGG" id="ypn:YPN_0219"/>
<dbReference type="HOGENOM" id="CLU_000524_4_0_6"/>
<dbReference type="Proteomes" id="UP000008936">
    <property type="component" value="Chromosome"/>
</dbReference>
<dbReference type="GO" id="GO:0000428">
    <property type="term" value="C:DNA-directed RNA polymerase complex"/>
    <property type="evidence" value="ECO:0007669"/>
    <property type="project" value="UniProtKB-KW"/>
</dbReference>
<dbReference type="GO" id="GO:0003677">
    <property type="term" value="F:DNA binding"/>
    <property type="evidence" value="ECO:0007669"/>
    <property type="project" value="UniProtKB-UniRule"/>
</dbReference>
<dbReference type="GO" id="GO:0003899">
    <property type="term" value="F:DNA-directed RNA polymerase activity"/>
    <property type="evidence" value="ECO:0007669"/>
    <property type="project" value="UniProtKB-UniRule"/>
</dbReference>
<dbReference type="GO" id="GO:0032549">
    <property type="term" value="F:ribonucleoside binding"/>
    <property type="evidence" value="ECO:0007669"/>
    <property type="project" value="InterPro"/>
</dbReference>
<dbReference type="GO" id="GO:0006351">
    <property type="term" value="P:DNA-templated transcription"/>
    <property type="evidence" value="ECO:0007669"/>
    <property type="project" value="UniProtKB-UniRule"/>
</dbReference>
<dbReference type="CDD" id="cd00653">
    <property type="entry name" value="RNA_pol_B_RPB2"/>
    <property type="match status" value="1"/>
</dbReference>
<dbReference type="FunFam" id="2.30.150.10:FF:000001">
    <property type="entry name" value="DNA-directed RNA polymerase subunit beta"/>
    <property type="match status" value="1"/>
</dbReference>
<dbReference type="FunFam" id="2.40.270.10:FF:000003">
    <property type="entry name" value="DNA-directed RNA polymerase subunit beta"/>
    <property type="match status" value="1"/>
</dbReference>
<dbReference type="FunFam" id="2.40.270.10:FF:000004">
    <property type="entry name" value="DNA-directed RNA polymerase subunit beta"/>
    <property type="match status" value="1"/>
</dbReference>
<dbReference type="FunFam" id="2.40.50.100:FF:000006">
    <property type="entry name" value="DNA-directed RNA polymerase subunit beta"/>
    <property type="match status" value="1"/>
</dbReference>
<dbReference type="FunFam" id="2.40.50.150:FF:000001">
    <property type="entry name" value="DNA-directed RNA polymerase subunit beta"/>
    <property type="match status" value="1"/>
</dbReference>
<dbReference type="FunFam" id="3.90.1100.10:FF:000002">
    <property type="entry name" value="DNA-directed RNA polymerase subunit beta"/>
    <property type="match status" value="1"/>
</dbReference>
<dbReference type="FunFam" id="3.90.1110.10:FF:000001">
    <property type="entry name" value="DNA-directed RNA polymerase subunit beta"/>
    <property type="match status" value="1"/>
</dbReference>
<dbReference type="FunFam" id="3.90.1110.10:FF:000004">
    <property type="entry name" value="DNA-directed RNA polymerase subunit beta"/>
    <property type="match status" value="1"/>
</dbReference>
<dbReference type="FunFam" id="3.90.1800.10:FF:000001">
    <property type="entry name" value="DNA-directed RNA polymerase subunit beta"/>
    <property type="match status" value="1"/>
</dbReference>
<dbReference type="Gene3D" id="2.40.50.100">
    <property type="match status" value="1"/>
</dbReference>
<dbReference type="Gene3D" id="2.40.50.150">
    <property type="match status" value="1"/>
</dbReference>
<dbReference type="Gene3D" id="3.90.1100.10">
    <property type="match status" value="2"/>
</dbReference>
<dbReference type="Gene3D" id="2.30.150.10">
    <property type="entry name" value="DNA-directed RNA polymerase, beta subunit, external 1 domain"/>
    <property type="match status" value="1"/>
</dbReference>
<dbReference type="Gene3D" id="2.40.270.10">
    <property type="entry name" value="DNA-directed RNA polymerase, subunit 2, domain 6"/>
    <property type="match status" value="1"/>
</dbReference>
<dbReference type="Gene3D" id="3.90.1800.10">
    <property type="entry name" value="RNA polymerase alpha subunit dimerisation domain"/>
    <property type="match status" value="1"/>
</dbReference>
<dbReference type="Gene3D" id="3.90.1110.10">
    <property type="entry name" value="RNA polymerase Rpb2, domain 2"/>
    <property type="match status" value="1"/>
</dbReference>
<dbReference type="HAMAP" id="MF_01321">
    <property type="entry name" value="RNApol_bact_RpoB"/>
    <property type="match status" value="1"/>
</dbReference>
<dbReference type="InterPro" id="IPR042107">
    <property type="entry name" value="DNA-dir_RNA_pol_bsu_ext_1_sf"/>
</dbReference>
<dbReference type="InterPro" id="IPR019462">
    <property type="entry name" value="DNA-dir_RNA_pol_bsu_external_1"/>
</dbReference>
<dbReference type="InterPro" id="IPR015712">
    <property type="entry name" value="DNA-dir_RNA_pol_su2"/>
</dbReference>
<dbReference type="InterPro" id="IPR007120">
    <property type="entry name" value="DNA-dir_RNAP_su2_dom"/>
</dbReference>
<dbReference type="InterPro" id="IPR037033">
    <property type="entry name" value="DNA-dir_RNAP_su2_hyb_sf"/>
</dbReference>
<dbReference type="InterPro" id="IPR010243">
    <property type="entry name" value="RNA_pol_bsu_bac"/>
</dbReference>
<dbReference type="InterPro" id="IPR007121">
    <property type="entry name" value="RNA_pol_bsu_CS"/>
</dbReference>
<dbReference type="InterPro" id="IPR007644">
    <property type="entry name" value="RNA_pol_bsu_protrusion"/>
</dbReference>
<dbReference type="InterPro" id="IPR007642">
    <property type="entry name" value="RNA_pol_Rpb2_2"/>
</dbReference>
<dbReference type="InterPro" id="IPR037034">
    <property type="entry name" value="RNA_pol_Rpb2_2_sf"/>
</dbReference>
<dbReference type="InterPro" id="IPR007645">
    <property type="entry name" value="RNA_pol_Rpb2_3"/>
</dbReference>
<dbReference type="InterPro" id="IPR007641">
    <property type="entry name" value="RNA_pol_Rpb2_7"/>
</dbReference>
<dbReference type="InterPro" id="IPR014724">
    <property type="entry name" value="RNA_pol_RPB2_OB-fold"/>
</dbReference>
<dbReference type="NCBIfam" id="NF001616">
    <property type="entry name" value="PRK00405.1"/>
    <property type="match status" value="1"/>
</dbReference>
<dbReference type="NCBIfam" id="TIGR02013">
    <property type="entry name" value="rpoB"/>
    <property type="match status" value="1"/>
</dbReference>
<dbReference type="PANTHER" id="PTHR20856">
    <property type="entry name" value="DNA-DIRECTED RNA POLYMERASE I SUBUNIT 2"/>
    <property type="match status" value="1"/>
</dbReference>
<dbReference type="Pfam" id="PF04563">
    <property type="entry name" value="RNA_pol_Rpb2_1"/>
    <property type="match status" value="1"/>
</dbReference>
<dbReference type="Pfam" id="PF04561">
    <property type="entry name" value="RNA_pol_Rpb2_2"/>
    <property type="match status" value="2"/>
</dbReference>
<dbReference type="Pfam" id="PF04565">
    <property type="entry name" value="RNA_pol_Rpb2_3"/>
    <property type="match status" value="1"/>
</dbReference>
<dbReference type="Pfam" id="PF10385">
    <property type="entry name" value="RNA_pol_Rpb2_45"/>
    <property type="match status" value="1"/>
</dbReference>
<dbReference type="Pfam" id="PF00562">
    <property type="entry name" value="RNA_pol_Rpb2_6"/>
    <property type="match status" value="1"/>
</dbReference>
<dbReference type="Pfam" id="PF04560">
    <property type="entry name" value="RNA_pol_Rpb2_7"/>
    <property type="match status" value="1"/>
</dbReference>
<dbReference type="SUPFAM" id="SSF64484">
    <property type="entry name" value="beta and beta-prime subunits of DNA dependent RNA-polymerase"/>
    <property type="match status" value="1"/>
</dbReference>
<dbReference type="PROSITE" id="PS01166">
    <property type="entry name" value="RNA_POL_BETA"/>
    <property type="match status" value="1"/>
</dbReference>
<protein>
    <recommendedName>
        <fullName evidence="1">DNA-directed RNA polymerase subunit beta</fullName>
        <shortName evidence="1">RNAP subunit beta</shortName>
        <ecNumber evidence="1">2.7.7.6</ecNumber>
    </recommendedName>
    <alternativeName>
        <fullName evidence="1">RNA polymerase subunit beta</fullName>
    </alternativeName>
    <alternativeName>
        <fullName evidence="1">Transcriptase subunit beta</fullName>
    </alternativeName>
</protein>
<keyword id="KW-0240">DNA-directed RNA polymerase</keyword>
<keyword id="KW-0548">Nucleotidyltransferase</keyword>
<keyword id="KW-0804">Transcription</keyword>
<keyword id="KW-0808">Transferase</keyword>
<reference key="1">
    <citation type="journal article" date="2006" name="J. Bacteriol.">
        <title>Complete genome sequence of Yersinia pestis strains Antiqua and Nepal516: evidence of gene reduction in an emerging pathogen.</title>
        <authorList>
            <person name="Chain P.S.G."/>
            <person name="Hu P."/>
            <person name="Malfatti S.A."/>
            <person name="Radnedge L."/>
            <person name="Larimer F."/>
            <person name="Vergez L.M."/>
            <person name="Worsham P."/>
            <person name="Chu M.C."/>
            <person name="Andersen G.L."/>
        </authorList>
    </citation>
    <scope>NUCLEOTIDE SEQUENCE [LARGE SCALE GENOMIC DNA]</scope>
    <source>
        <strain>Nepal516</strain>
    </source>
</reference>
<reference key="2">
    <citation type="submission" date="2009-04" db="EMBL/GenBank/DDBJ databases">
        <title>Yersinia pestis Nepal516A whole genome shotgun sequencing project.</title>
        <authorList>
            <person name="Plunkett G. III"/>
            <person name="Anderson B.D."/>
            <person name="Baumler D.J."/>
            <person name="Burland V."/>
            <person name="Cabot E.L."/>
            <person name="Glasner J.D."/>
            <person name="Mau B."/>
            <person name="Neeno-Eckwall E."/>
            <person name="Perna N.T."/>
            <person name="Munk A.C."/>
            <person name="Tapia R."/>
            <person name="Green L.D."/>
            <person name="Rogers Y.C."/>
            <person name="Detter J.C."/>
            <person name="Bruce D.C."/>
            <person name="Brettin T.S."/>
        </authorList>
    </citation>
    <scope>NUCLEOTIDE SEQUENCE [LARGE SCALE GENOMIC DNA]</scope>
    <source>
        <strain>Nepal516</strain>
    </source>
</reference>
<accession>Q1CN78</accession>
<accession>C4GNE6</accession>
<evidence type="ECO:0000255" key="1">
    <source>
        <dbReference type="HAMAP-Rule" id="MF_01321"/>
    </source>
</evidence>
<name>RPOB_YERPN</name>
<gene>
    <name evidence="1" type="primary">rpoB</name>
    <name type="ordered locus">YPN_0219</name>
    <name type="ORF">YP516_0196</name>
</gene>